<evidence type="ECO:0000250" key="1"/>
<evidence type="ECO:0000256" key="2">
    <source>
        <dbReference type="SAM" id="MobiDB-lite"/>
    </source>
</evidence>
<evidence type="ECO:0000305" key="3"/>
<organism>
    <name type="scientific">Komagataella phaffii (strain GS115 / ATCC 20864)</name>
    <name type="common">Yeast</name>
    <name type="synonym">Pichia pastoris</name>
    <dbReference type="NCBI Taxonomy" id="644223"/>
    <lineage>
        <taxon>Eukaryota</taxon>
        <taxon>Fungi</taxon>
        <taxon>Dikarya</taxon>
        <taxon>Ascomycota</taxon>
        <taxon>Saccharomycotina</taxon>
        <taxon>Pichiomycetes</taxon>
        <taxon>Pichiales</taxon>
        <taxon>Pichiaceae</taxon>
        <taxon>Komagataella</taxon>
    </lineage>
</organism>
<dbReference type="EMBL" id="FN392321">
    <property type="protein sequence ID" value="CAY70727.1"/>
    <property type="molecule type" value="Genomic_DNA"/>
</dbReference>
<dbReference type="RefSeq" id="XP_002492906.1">
    <property type="nucleotide sequence ID" value="XM_002492861.1"/>
</dbReference>
<dbReference type="SMR" id="C4R591"/>
<dbReference type="FunCoup" id="C4R591">
    <property type="interactions" value="13"/>
</dbReference>
<dbReference type="STRING" id="644223.C4R591"/>
<dbReference type="EnsemblFungi" id="CAY70727">
    <property type="protein sequence ID" value="CAY70727"/>
    <property type="gene ID" value="PAS_chr3_0678"/>
</dbReference>
<dbReference type="GeneID" id="8200378"/>
<dbReference type="KEGG" id="ppa:PAS_chr3_0678"/>
<dbReference type="eggNOG" id="ENOG502RNK4">
    <property type="taxonomic scope" value="Eukaryota"/>
</dbReference>
<dbReference type="HOGENOM" id="CLU_054606_0_0_1"/>
<dbReference type="InParanoid" id="C4R591"/>
<dbReference type="OMA" id="HRTHAIM"/>
<dbReference type="OrthoDB" id="10061064at2759"/>
<dbReference type="Proteomes" id="UP000000314">
    <property type="component" value="Chromosome 3"/>
</dbReference>
<dbReference type="GO" id="GO:0005737">
    <property type="term" value="C:cytoplasm"/>
    <property type="evidence" value="ECO:0007669"/>
    <property type="project" value="UniProtKB-SubCell"/>
</dbReference>
<dbReference type="GO" id="GO:0031965">
    <property type="term" value="C:nuclear membrane"/>
    <property type="evidence" value="ECO:0007669"/>
    <property type="project" value="TreeGrafter"/>
</dbReference>
<dbReference type="GO" id="GO:0070628">
    <property type="term" value="F:proteasome binding"/>
    <property type="evidence" value="ECO:0007669"/>
    <property type="project" value="TreeGrafter"/>
</dbReference>
<dbReference type="GO" id="GO:0071630">
    <property type="term" value="P:nuclear protein quality control by the ubiquitin-proteasome system"/>
    <property type="evidence" value="ECO:0007669"/>
    <property type="project" value="InterPro"/>
</dbReference>
<dbReference type="GO" id="GO:0031144">
    <property type="term" value="P:proteasome localization"/>
    <property type="evidence" value="ECO:0007669"/>
    <property type="project" value="InterPro"/>
</dbReference>
<dbReference type="GO" id="GO:0015031">
    <property type="term" value="P:protein transport"/>
    <property type="evidence" value="ECO:0007669"/>
    <property type="project" value="UniProtKB-KW"/>
</dbReference>
<dbReference type="Gene3D" id="1.20.58.1590">
    <property type="entry name" value="Tethering factor for nuclear proteasome Cut8/Sts1"/>
    <property type="match status" value="1"/>
</dbReference>
<dbReference type="InterPro" id="IPR013868">
    <property type="entry name" value="Cut8/Sts1_fam"/>
</dbReference>
<dbReference type="InterPro" id="IPR038422">
    <property type="entry name" value="Cut8/Sts1_sf"/>
</dbReference>
<dbReference type="PANTHER" id="PTHR28032">
    <property type="entry name" value="FI02826P"/>
    <property type="match status" value="1"/>
</dbReference>
<dbReference type="PANTHER" id="PTHR28032:SF1">
    <property type="entry name" value="FI02826P"/>
    <property type="match status" value="1"/>
</dbReference>
<dbReference type="Pfam" id="PF08559">
    <property type="entry name" value="Cut8"/>
    <property type="match status" value="1"/>
</dbReference>
<protein>
    <recommendedName>
        <fullName>Tethering factor for nuclear proteasome STS1</fullName>
    </recommendedName>
</protein>
<name>STS1_KOMPG</name>
<keyword id="KW-0963">Cytoplasm</keyword>
<keyword id="KW-0539">Nucleus</keyword>
<keyword id="KW-0653">Protein transport</keyword>
<keyword id="KW-1185">Reference proteome</keyword>
<keyword id="KW-0813">Transport</keyword>
<gene>
    <name type="primary">STS1</name>
    <name type="ordered locus">PAS_chr3_0678</name>
</gene>
<proteinExistence type="inferred from homology"/>
<feature type="chain" id="PRO_0000409428" description="Tethering factor for nuclear proteasome STS1">
    <location>
        <begin position="1"/>
        <end position="291"/>
    </location>
</feature>
<feature type="region of interest" description="Disordered" evidence="2">
    <location>
        <begin position="37"/>
        <end position="56"/>
    </location>
</feature>
<accession>C4R591</accession>
<comment type="function">
    <text evidence="1">Involved in ubiquitin-mediated protein degradation. Regulatory factor in the ubiquitin/proteasome pathway that controls the turnover of proteasome substrates. Targets proteasomes to the nucleus and facilitates the degradation of nuclear proteins (By similarity).</text>
</comment>
<comment type="subunit">
    <text evidence="1">Binds the proteasome.</text>
</comment>
<comment type="subcellular location">
    <subcellularLocation>
        <location evidence="1">Cytoplasm</location>
    </subcellularLocation>
    <subcellularLocation>
        <location evidence="1">Nucleus</location>
    </subcellularLocation>
</comment>
<comment type="similarity">
    <text evidence="3">Belongs to the cut8/STS1 family.</text>
</comment>
<sequence>MSSLQTSFPWGFKKAVISKPTKNKRKIQEDIDTLGDAKSRTKFHPNNSNSTSRKHRTHAIMGTKLPLNTLIETLDHESLQKLVKSLVEQRPDVQEALYNAAPTVTVQVCIDKLTDKVENIKCNLPYKVDTECDYTYLRVKALVHEFFQALSDYMLNFLPPQEYDVSKSIEFLNGFLLKVLLKMPMFSHMEFKYYYKLTLDKLNTVYVNLIADFIQQKPTNILLLKDSDLAEKLLEINKHYEDYFEQVSQLLSQDEGSDIPERLQGLSNLLNFSSENNPLNGGVVSSVKGSW</sequence>
<reference key="1">
    <citation type="journal article" date="2009" name="Nat. Biotechnol.">
        <title>Genome sequence of the recombinant protein production host Pichia pastoris.</title>
        <authorList>
            <person name="De Schutter K."/>
            <person name="Lin Y.-C."/>
            <person name="Tiels P."/>
            <person name="Van Hecke A."/>
            <person name="Glinka S."/>
            <person name="Weber-Lehmann J."/>
            <person name="Rouze P."/>
            <person name="Van de Peer Y."/>
            <person name="Callewaert N."/>
        </authorList>
    </citation>
    <scope>NUCLEOTIDE SEQUENCE [LARGE SCALE GENOMIC DNA]</scope>
    <source>
        <strain>GS115 / ATCC 20864</strain>
    </source>
</reference>